<evidence type="ECO:0000255" key="1"/>
<evidence type="ECO:0000305" key="2"/>
<evidence type="ECO:0000312" key="3">
    <source>
        <dbReference type="Araport" id="AT3G52155"/>
    </source>
</evidence>
<evidence type="ECO:0000312" key="4">
    <source>
        <dbReference type="EMBL" id="CAB41335.1"/>
    </source>
</evidence>
<name>Y3515_ARATH</name>
<accession>Q94BY1</accession>
<accession>Q9SUZ0</accession>
<protein>
    <recommendedName>
        <fullName evidence="2">Uncharacterized protein At3g52155, chloroplastic</fullName>
        <ecNumber>3.1.3.-</ecNumber>
    </recommendedName>
</protein>
<reference key="1">
    <citation type="journal article" date="2000" name="Nature">
        <title>Sequence and analysis of chromosome 3 of the plant Arabidopsis thaliana.</title>
        <authorList>
            <person name="Salanoubat M."/>
            <person name="Lemcke K."/>
            <person name="Rieger M."/>
            <person name="Ansorge W."/>
            <person name="Unseld M."/>
            <person name="Fartmann B."/>
            <person name="Valle G."/>
            <person name="Bloecker H."/>
            <person name="Perez-Alonso M."/>
            <person name="Obermaier B."/>
            <person name="Delseny M."/>
            <person name="Boutry M."/>
            <person name="Grivell L.A."/>
            <person name="Mache R."/>
            <person name="Puigdomenech P."/>
            <person name="De Simone V."/>
            <person name="Choisne N."/>
            <person name="Artiguenave F."/>
            <person name="Robert C."/>
            <person name="Brottier P."/>
            <person name="Wincker P."/>
            <person name="Cattolico L."/>
            <person name="Weissenbach J."/>
            <person name="Saurin W."/>
            <person name="Quetier F."/>
            <person name="Schaefer M."/>
            <person name="Mueller-Auer S."/>
            <person name="Gabel C."/>
            <person name="Fuchs M."/>
            <person name="Benes V."/>
            <person name="Wurmbach E."/>
            <person name="Drzonek H."/>
            <person name="Erfle H."/>
            <person name="Jordan N."/>
            <person name="Bangert S."/>
            <person name="Wiedelmann R."/>
            <person name="Kranz H."/>
            <person name="Voss H."/>
            <person name="Holland R."/>
            <person name="Brandt P."/>
            <person name="Nyakatura G."/>
            <person name="Vezzi A."/>
            <person name="D'Angelo M."/>
            <person name="Pallavicini A."/>
            <person name="Toppo S."/>
            <person name="Simionati B."/>
            <person name="Conrad A."/>
            <person name="Hornischer K."/>
            <person name="Kauer G."/>
            <person name="Loehnert T.-H."/>
            <person name="Nordsiek G."/>
            <person name="Reichelt J."/>
            <person name="Scharfe M."/>
            <person name="Schoen O."/>
            <person name="Bargues M."/>
            <person name="Terol J."/>
            <person name="Climent J."/>
            <person name="Navarro P."/>
            <person name="Collado C."/>
            <person name="Perez-Perez A."/>
            <person name="Ottenwaelder B."/>
            <person name="Duchemin D."/>
            <person name="Cooke R."/>
            <person name="Laudie M."/>
            <person name="Berger-Llauro C."/>
            <person name="Purnelle B."/>
            <person name="Masuy D."/>
            <person name="de Haan M."/>
            <person name="Maarse A.C."/>
            <person name="Alcaraz J.-P."/>
            <person name="Cottet A."/>
            <person name="Casacuberta E."/>
            <person name="Monfort A."/>
            <person name="Argiriou A."/>
            <person name="Flores M."/>
            <person name="Liguori R."/>
            <person name="Vitale D."/>
            <person name="Mannhaupt G."/>
            <person name="Haase D."/>
            <person name="Schoof H."/>
            <person name="Rudd S."/>
            <person name="Zaccaria P."/>
            <person name="Mewes H.-W."/>
            <person name="Mayer K.F.X."/>
            <person name="Kaul S."/>
            <person name="Town C.D."/>
            <person name="Koo H.L."/>
            <person name="Tallon L.J."/>
            <person name="Jenkins J."/>
            <person name="Rooney T."/>
            <person name="Rizzo M."/>
            <person name="Walts A."/>
            <person name="Utterback T."/>
            <person name="Fujii C.Y."/>
            <person name="Shea T.P."/>
            <person name="Creasy T.H."/>
            <person name="Haas B."/>
            <person name="Maiti R."/>
            <person name="Wu D."/>
            <person name="Peterson J."/>
            <person name="Van Aken S."/>
            <person name="Pai G."/>
            <person name="Militscher J."/>
            <person name="Sellers P."/>
            <person name="Gill J.E."/>
            <person name="Feldblyum T.V."/>
            <person name="Preuss D."/>
            <person name="Lin X."/>
            <person name="Nierman W.C."/>
            <person name="Salzberg S.L."/>
            <person name="White O."/>
            <person name="Venter J.C."/>
            <person name="Fraser C.M."/>
            <person name="Kaneko T."/>
            <person name="Nakamura Y."/>
            <person name="Sato S."/>
            <person name="Kato T."/>
            <person name="Asamizu E."/>
            <person name="Sasamoto S."/>
            <person name="Kimura T."/>
            <person name="Idesawa K."/>
            <person name="Kawashima K."/>
            <person name="Kishida Y."/>
            <person name="Kiyokawa C."/>
            <person name="Kohara M."/>
            <person name="Matsumoto M."/>
            <person name="Matsuno A."/>
            <person name="Muraki A."/>
            <person name="Nakayama S."/>
            <person name="Nakazaki N."/>
            <person name="Shinpo S."/>
            <person name="Takeuchi C."/>
            <person name="Wada T."/>
            <person name="Watanabe A."/>
            <person name="Yamada M."/>
            <person name="Yasuda M."/>
            <person name="Tabata S."/>
        </authorList>
    </citation>
    <scope>NUCLEOTIDE SEQUENCE [LARGE SCALE GENOMIC DNA]</scope>
    <source>
        <strain>cv. Columbia</strain>
    </source>
</reference>
<reference key="2">
    <citation type="journal article" date="2017" name="Plant J.">
        <title>Araport11: a complete reannotation of the Arabidopsis thaliana reference genome.</title>
        <authorList>
            <person name="Cheng C.Y."/>
            <person name="Krishnakumar V."/>
            <person name="Chan A.P."/>
            <person name="Thibaud-Nissen F."/>
            <person name="Schobel S."/>
            <person name="Town C.D."/>
        </authorList>
    </citation>
    <scope>GENOME REANNOTATION</scope>
    <source>
        <strain>cv. Columbia</strain>
    </source>
</reference>
<reference key="3">
    <citation type="journal article" date="2003" name="Science">
        <title>Empirical analysis of transcriptional activity in the Arabidopsis genome.</title>
        <authorList>
            <person name="Yamada K."/>
            <person name="Lim J."/>
            <person name="Dale J.M."/>
            <person name="Chen H."/>
            <person name="Shinn P."/>
            <person name="Palm C.J."/>
            <person name="Southwick A.M."/>
            <person name="Wu H.C."/>
            <person name="Kim C.J."/>
            <person name="Nguyen M."/>
            <person name="Pham P.K."/>
            <person name="Cheuk R.F."/>
            <person name="Karlin-Newmann G."/>
            <person name="Liu S.X."/>
            <person name="Lam B."/>
            <person name="Sakano H."/>
            <person name="Wu T."/>
            <person name="Yu G."/>
            <person name="Miranda M."/>
            <person name="Quach H.L."/>
            <person name="Tripp M."/>
            <person name="Chang C.H."/>
            <person name="Lee J.M."/>
            <person name="Toriumi M.J."/>
            <person name="Chan M.M."/>
            <person name="Tang C.C."/>
            <person name="Onodera C.S."/>
            <person name="Deng J.M."/>
            <person name="Akiyama K."/>
            <person name="Ansari Y."/>
            <person name="Arakawa T."/>
            <person name="Banh J."/>
            <person name="Banno F."/>
            <person name="Bowser L."/>
            <person name="Brooks S.Y."/>
            <person name="Carninci P."/>
            <person name="Chao Q."/>
            <person name="Choy N."/>
            <person name="Enju A."/>
            <person name="Goldsmith A.D."/>
            <person name="Gurjal M."/>
            <person name="Hansen N.F."/>
            <person name="Hayashizaki Y."/>
            <person name="Johnson-Hopson C."/>
            <person name="Hsuan V.W."/>
            <person name="Iida K."/>
            <person name="Karnes M."/>
            <person name="Khan S."/>
            <person name="Koesema E."/>
            <person name="Ishida J."/>
            <person name="Jiang P.X."/>
            <person name="Jones T."/>
            <person name="Kawai J."/>
            <person name="Kamiya A."/>
            <person name="Meyers C."/>
            <person name="Nakajima M."/>
            <person name="Narusaka M."/>
            <person name="Seki M."/>
            <person name="Sakurai T."/>
            <person name="Satou M."/>
            <person name="Tamse R."/>
            <person name="Vaysberg M."/>
            <person name="Wallender E.K."/>
            <person name="Wong C."/>
            <person name="Yamamura Y."/>
            <person name="Yuan S."/>
            <person name="Shinozaki K."/>
            <person name="Davis R.W."/>
            <person name="Theologis A."/>
            <person name="Ecker J.R."/>
        </authorList>
    </citation>
    <scope>NUCLEOTIDE SEQUENCE [LARGE SCALE MRNA]</scope>
    <source>
        <strain>cv. Columbia</strain>
    </source>
</reference>
<dbReference type="EC" id="3.1.3.-"/>
<dbReference type="EMBL" id="AL049711">
    <property type="protein sequence ID" value="CAB41335.1"/>
    <property type="status" value="ALT_SEQ"/>
    <property type="molecule type" value="Genomic_DNA"/>
</dbReference>
<dbReference type="EMBL" id="CP002686">
    <property type="protein sequence ID" value="AEE78905.1"/>
    <property type="molecule type" value="Genomic_DNA"/>
</dbReference>
<dbReference type="EMBL" id="CP002686">
    <property type="protein sequence ID" value="ANM63658.1"/>
    <property type="molecule type" value="Genomic_DNA"/>
</dbReference>
<dbReference type="EMBL" id="AY039568">
    <property type="protein sequence ID" value="AAK62623.1"/>
    <property type="molecule type" value="mRNA"/>
</dbReference>
<dbReference type="EMBL" id="BT000858">
    <property type="protein sequence ID" value="AAN38695.1"/>
    <property type="molecule type" value="mRNA"/>
</dbReference>
<dbReference type="PIR" id="T49094">
    <property type="entry name" value="T49094"/>
</dbReference>
<dbReference type="RefSeq" id="NP_001325733.1">
    <property type="nucleotide sequence ID" value="NM_001339558.1"/>
</dbReference>
<dbReference type="RefSeq" id="NP_566959.1">
    <property type="nucleotide sequence ID" value="NM_115075.3"/>
</dbReference>
<dbReference type="SMR" id="Q94BY1"/>
<dbReference type="FunCoup" id="Q94BY1">
    <property type="interactions" value="808"/>
</dbReference>
<dbReference type="IntAct" id="Q94BY1">
    <property type="interactions" value="4"/>
</dbReference>
<dbReference type="STRING" id="3702.Q94BY1"/>
<dbReference type="PaxDb" id="3702-AT3G52155.1"/>
<dbReference type="ProteomicsDB" id="234662"/>
<dbReference type="EnsemblPlants" id="AT3G52155.1">
    <property type="protein sequence ID" value="AT3G52155.1"/>
    <property type="gene ID" value="AT3G52155"/>
</dbReference>
<dbReference type="EnsemblPlants" id="AT3G52155.3">
    <property type="protein sequence ID" value="AT3G52155.3"/>
    <property type="gene ID" value="AT3G52155"/>
</dbReference>
<dbReference type="GeneID" id="824380"/>
<dbReference type="Gramene" id="AT3G52155.1">
    <property type="protein sequence ID" value="AT3G52155.1"/>
    <property type="gene ID" value="AT3G52155"/>
</dbReference>
<dbReference type="Gramene" id="AT3G52155.3">
    <property type="protein sequence ID" value="AT3G52155.3"/>
    <property type="gene ID" value="AT3G52155"/>
</dbReference>
<dbReference type="KEGG" id="ath:AT3G52155"/>
<dbReference type="Araport" id="AT3G52155"/>
<dbReference type="TAIR" id="AT3G52155"/>
<dbReference type="eggNOG" id="KOG0118">
    <property type="taxonomic scope" value="Eukaryota"/>
</dbReference>
<dbReference type="HOGENOM" id="CLU_084603_0_0_1"/>
<dbReference type="InParanoid" id="Q94BY1"/>
<dbReference type="OrthoDB" id="2019724at2759"/>
<dbReference type="PhylomeDB" id="Q94BY1"/>
<dbReference type="PRO" id="PR:Q94BY1"/>
<dbReference type="Proteomes" id="UP000006548">
    <property type="component" value="Chromosome 3"/>
</dbReference>
<dbReference type="ExpressionAtlas" id="Q94BY1">
    <property type="expression patterns" value="baseline and differential"/>
</dbReference>
<dbReference type="GO" id="GO:0009507">
    <property type="term" value="C:chloroplast"/>
    <property type="evidence" value="ECO:0007005"/>
    <property type="project" value="TAIR"/>
</dbReference>
<dbReference type="GO" id="GO:0016787">
    <property type="term" value="F:hydrolase activity"/>
    <property type="evidence" value="ECO:0007669"/>
    <property type="project" value="UniProtKB-KW"/>
</dbReference>
<dbReference type="CDD" id="cd07067">
    <property type="entry name" value="HP_PGM_like"/>
    <property type="match status" value="1"/>
</dbReference>
<dbReference type="FunFam" id="3.40.50.1240:FF:000099">
    <property type="entry name" value="Uncharacterized protein At3g52155, chloroplastic"/>
    <property type="match status" value="1"/>
</dbReference>
<dbReference type="Gene3D" id="3.40.50.1240">
    <property type="entry name" value="Phosphoglycerate mutase-like"/>
    <property type="match status" value="1"/>
</dbReference>
<dbReference type="InterPro" id="IPR013078">
    <property type="entry name" value="His_Pase_superF_clade-1"/>
</dbReference>
<dbReference type="InterPro" id="IPR029033">
    <property type="entry name" value="His_PPase_superfam"/>
</dbReference>
<dbReference type="PANTHER" id="PTHR47623">
    <property type="entry name" value="OS09G0287300 PROTEIN"/>
    <property type="match status" value="1"/>
</dbReference>
<dbReference type="PANTHER" id="PTHR47623:SF1">
    <property type="entry name" value="OS09G0287300 PROTEIN"/>
    <property type="match status" value="1"/>
</dbReference>
<dbReference type="Pfam" id="PF00300">
    <property type="entry name" value="His_Phos_1"/>
    <property type="match status" value="1"/>
</dbReference>
<dbReference type="SMART" id="SM00855">
    <property type="entry name" value="PGAM"/>
    <property type="match status" value="1"/>
</dbReference>
<dbReference type="SUPFAM" id="SSF53254">
    <property type="entry name" value="Phosphoglycerate mutase-like"/>
    <property type="match status" value="1"/>
</dbReference>
<feature type="transit peptide" description="Chloroplast" evidence="1">
    <location>
        <begin position="1"/>
        <end position="28"/>
    </location>
</feature>
<feature type="chain" id="PRO_0000441634" description="Uncharacterized protein At3g52155, chloroplastic" evidence="1">
    <location>
        <begin position="29"/>
        <end position="218"/>
    </location>
</feature>
<sequence length="218" mass="23588">MLSLQCLPPFFISVPNRSTNSCSTAPLRAVSDFAASPSTSISRRLILLRHAHSSWDDLSLRDHDRPLSKTGEADAAKVAQILSSLGWLPQLILSSDATRTRETLKSMQAQVDGFMEANVHFIPSFYSIAAMDGQTAEHLQNIISKYSTPDISTIMCMGHNKGWEEAASMLSGASIKLKTCNAALLQAFGNSWEEAFALSGPGGWKLEGLVAPDSSIFV</sequence>
<keyword id="KW-0150">Chloroplast</keyword>
<keyword id="KW-0378">Hydrolase</keyword>
<keyword id="KW-0934">Plastid</keyword>
<keyword id="KW-1185">Reference proteome</keyword>
<keyword id="KW-0809">Transit peptide</keyword>
<proteinExistence type="evidence at protein level"/>
<comment type="interaction">
    <interactant intactId="EBI-4443456">
        <id>Q94BY1</id>
    </interactant>
    <interactant intactId="EBI-4429250">
        <id>Q9LPR8</id>
        <label>SCL3</label>
    </interactant>
    <organismsDiffer>false</organismsDiffer>
    <experiments>3</experiments>
</comment>
<comment type="subcellular location">
    <subcellularLocation>
        <location evidence="1">Plastid</location>
        <location evidence="1">Chloroplast</location>
    </subcellularLocation>
</comment>
<comment type="similarity">
    <text evidence="2">Belongs to the SixA phosphatase family.</text>
</comment>
<comment type="sequence caution" evidence="2">
    <conflict type="erroneous gene model prediction">
        <sequence resource="EMBL-CDS" id="CAB41335"/>
    </conflict>
    <text>The predicted gene At3g52150 has been split into 2 genes: At3g52150 and At3g52155.</text>
</comment>
<gene>
    <name evidence="3" type="ordered locus">At3g52155</name>
    <name evidence="4" type="ORF">F4F15.260</name>
</gene>
<organism>
    <name type="scientific">Arabidopsis thaliana</name>
    <name type="common">Mouse-ear cress</name>
    <dbReference type="NCBI Taxonomy" id="3702"/>
    <lineage>
        <taxon>Eukaryota</taxon>
        <taxon>Viridiplantae</taxon>
        <taxon>Streptophyta</taxon>
        <taxon>Embryophyta</taxon>
        <taxon>Tracheophyta</taxon>
        <taxon>Spermatophyta</taxon>
        <taxon>Magnoliopsida</taxon>
        <taxon>eudicotyledons</taxon>
        <taxon>Gunneridae</taxon>
        <taxon>Pentapetalae</taxon>
        <taxon>rosids</taxon>
        <taxon>malvids</taxon>
        <taxon>Brassicales</taxon>
        <taxon>Brassicaceae</taxon>
        <taxon>Camelineae</taxon>
        <taxon>Arabidopsis</taxon>
    </lineage>
</organism>